<sequence length="101" mass="11472">MSISSAVDQYTVLTGDRSKIKDLLCSRLTECGWRDEVRLMCRNILIEKGTNNSFTVEQLIAEVTPKARTLVPDAVKKELLMKIRTILTEIEEEADEPEDES</sequence>
<feature type="chain" id="PRO_0000367559" description="Enhancer of yellow 2 transcription factor">
    <location>
        <begin position="1"/>
        <end position="101"/>
    </location>
</feature>
<accession>B4IK33</accession>
<organism>
    <name type="scientific">Drosophila sechellia</name>
    <name type="common">Fruit fly</name>
    <dbReference type="NCBI Taxonomy" id="7238"/>
    <lineage>
        <taxon>Eukaryota</taxon>
        <taxon>Metazoa</taxon>
        <taxon>Ecdysozoa</taxon>
        <taxon>Arthropoda</taxon>
        <taxon>Hexapoda</taxon>
        <taxon>Insecta</taxon>
        <taxon>Pterygota</taxon>
        <taxon>Neoptera</taxon>
        <taxon>Endopterygota</taxon>
        <taxon>Diptera</taxon>
        <taxon>Brachycera</taxon>
        <taxon>Muscomorpha</taxon>
        <taxon>Ephydroidea</taxon>
        <taxon>Drosophilidae</taxon>
        <taxon>Drosophila</taxon>
        <taxon>Sophophora</taxon>
    </lineage>
</organism>
<proteinExistence type="inferred from homology"/>
<dbReference type="EMBL" id="CH480851">
    <property type="protein sequence ID" value="EDW51405.1"/>
    <property type="molecule type" value="Genomic_DNA"/>
</dbReference>
<dbReference type="SMR" id="B4IK33"/>
<dbReference type="STRING" id="7238.B4IK33"/>
<dbReference type="EnsemblMetazoa" id="FBtr0196048">
    <property type="protein sequence ID" value="FBpp0194540"/>
    <property type="gene ID" value="FBgn0167994"/>
</dbReference>
<dbReference type="EnsemblMetazoa" id="XM_002044057.2">
    <property type="protein sequence ID" value="XP_002044093.1"/>
    <property type="gene ID" value="LOC6619880"/>
</dbReference>
<dbReference type="GeneID" id="6619880"/>
<dbReference type="KEGG" id="dse:6619880"/>
<dbReference type="CTD" id="45848"/>
<dbReference type="HOGENOM" id="CLU_134052_1_2_1"/>
<dbReference type="OMA" id="RLMCRNI"/>
<dbReference type="OrthoDB" id="40744at7215"/>
<dbReference type="PhylomeDB" id="B4IK33"/>
<dbReference type="Proteomes" id="UP000001292">
    <property type="component" value="Unassembled WGS sequence"/>
</dbReference>
<dbReference type="GO" id="GO:0005737">
    <property type="term" value="C:cytoplasm"/>
    <property type="evidence" value="ECO:0007669"/>
    <property type="project" value="UniProtKB-SubCell"/>
</dbReference>
<dbReference type="GO" id="GO:0071819">
    <property type="term" value="C:DUBm complex"/>
    <property type="evidence" value="ECO:0007669"/>
    <property type="project" value="UniProtKB-UniRule"/>
</dbReference>
<dbReference type="GO" id="GO:0034399">
    <property type="term" value="C:nuclear periphery"/>
    <property type="evidence" value="ECO:0007669"/>
    <property type="project" value="EnsemblMetazoa"/>
</dbReference>
<dbReference type="GO" id="GO:0005643">
    <property type="term" value="C:nuclear pore"/>
    <property type="evidence" value="ECO:0000250"/>
    <property type="project" value="UniProtKB"/>
</dbReference>
<dbReference type="GO" id="GO:0005654">
    <property type="term" value="C:nucleoplasm"/>
    <property type="evidence" value="ECO:0007669"/>
    <property type="project" value="UniProtKB-SubCell"/>
</dbReference>
<dbReference type="GO" id="GO:0000124">
    <property type="term" value="C:SAGA complex"/>
    <property type="evidence" value="ECO:0000250"/>
    <property type="project" value="UniProtKB"/>
</dbReference>
<dbReference type="GO" id="GO:0070390">
    <property type="term" value="C:transcription export complex 2"/>
    <property type="evidence" value="ECO:0007669"/>
    <property type="project" value="UniProtKB-UniRule"/>
</dbReference>
<dbReference type="GO" id="GO:0070742">
    <property type="term" value="F:C2H2 zinc finger domain binding"/>
    <property type="evidence" value="ECO:0007669"/>
    <property type="project" value="EnsemblMetazoa"/>
</dbReference>
<dbReference type="GO" id="GO:0043035">
    <property type="term" value="F:chromatin insulator sequence binding"/>
    <property type="evidence" value="ECO:0000250"/>
    <property type="project" value="UniProtKB"/>
</dbReference>
<dbReference type="GO" id="GO:0001094">
    <property type="term" value="F:TFIID-class transcription factor complex binding"/>
    <property type="evidence" value="ECO:0007669"/>
    <property type="project" value="EnsemblMetazoa"/>
</dbReference>
<dbReference type="GO" id="GO:0003713">
    <property type="term" value="F:transcription coactivator activity"/>
    <property type="evidence" value="ECO:0007669"/>
    <property type="project" value="UniProtKB-UniRule"/>
</dbReference>
<dbReference type="GO" id="GO:0033696">
    <property type="term" value="P:heterochromatin boundary formation"/>
    <property type="evidence" value="ECO:0007669"/>
    <property type="project" value="EnsemblMetazoa"/>
</dbReference>
<dbReference type="GO" id="GO:0006406">
    <property type="term" value="P:mRNA export from nucleus"/>
    <property type="evidence" value="ECO:0000250"/>
    <property type="project" value="UniProtKB"/>
</dbReference>
<dbReference type="GO" id="GO:0016973">
    <property type="term" value="P:poly(A)+ mRNA export from nucleus"/>
    <property type="evidence" value="ECO:0007669"/>
    <property type="project" value="EnsemblMetazoa"/>
</dbReference>
<dbReference type="GO" id="GO:0045944">
    <property type="term" value="P:positive regulation of transcription by RNA polymerase II"/>
    <property type="evidence" value="ECO:0000250"/>
    <property type="project" value="UniProtKB"/>
</dbReference>
<dbReference type="GO" id="GO:0015031">
    <property type="term" value="P:protein transport"/>
    <property type="evidence" value="ECO:0007669"/>
    <property type="project" value="UniProtKB-KW"/>
</dbReference>
<dbReference type="GO" id="GO:0006368">
    <property type="term" value="P:transcription elongation by RNA polymerase II"/>
    <property type="evidence" value="ECO:0007669"/>
    <property type="project" value="UniProtKB-UniRule"/>
</dbReference>
<dbReference type="FunFam" id="1.10.246.140:FF:000002">
    <property type="entry name" value="Enhancer of yellow 2 transcription factor"/>
    <property type="match status" value="1"/>
</dbReference>
<dbReference type="Gene3D" id="1.10.246.140">
    <property type="match status" value="1"/>
</dbReference>
<dbReference type="HAMAP" id="MF_03046">
    <property type="entry name" value="ENY2_Sus1"/>
    <property type="match status" value="1"/>
</dbReference>
<dbReference type="InterPro" id="IPR018783">
    <property type="entry name" value="TF_ENY2"/>
</dbReference>
<dbReference type="InterPro" id="IPR038212">
    <property type="entry name" value="TF_EnY2_sf"/>
</dbReference>
<dbReference type="PANTHER" id="PTHR12514">
    <property type="entry name" value="ENHANCER OF YELLOW 2 TRANSCRIPTION FACTOR"/>
    <property type="match status" value="1"/>
</dbReference>
<dbReference type="Pfam" id="PF10163">
    <property type="entry name" value="EnY2"/>
    <property type="match status" value="1"/>
</dbReference>
<protein>
    <recommendedName>
        <fullName evidence="2">Enhancer of yellow 2 transcription factor</fullName>
    </recommendedName>
</protein>
<comment type="function">
    <text evidence="1">Involved in mRNA export coupled transcription activation by association with both the AMEX and the SAGA complexes. The SAGA complex is a multiprotein complex that activates transcription by remodeling chromatin and mediating histone acetylation and deubiquitination. Within the SAGA complex, participates in a subcomplex that specifically deubiquitinates histone H2B. The SAGA complex is recruited to specific gene promoters by activators, where it is required for transcription. Required for nuclear receptor-mediated transactivation. Involved in transcription elongation by recruiting the THO complex onto nascent mRNA. The AMEX complex functions in docking export-competent ribonucleoprotein particles (mRNPs) to the nuclear entrance of the nuclear pore complex (nuclear basket). AMEX participates in mRNA export and accurate chromatin positioning in the nucleus by tethering genes to the nuclear periphery (By similarity).</text>
</comment>
<comment type="subunit">
    <text evidence="2">Component of the nuclear pore complex (NPC)-associated AMEX complex (anchoring and mRNA export complex), composed of at least e(y)2 and xmas-2. Component of the SAGA transcription coactivator-HAT complexes, at least composed of Ada2b, e(y)2, Pcaf/Gcn5, Taf10 and Nipped-A/Trrap. Within the SAGA complex, e(y)2, Sgf11, and not/nonstop form an additional subcomplex of SAGA called the DUB module (deubiquitination module). Component of the THO complex, composed of at least e(y)2, HPR1, THO2, THOC5, THOC6 and THOC7. Interacts with e(y)1. Interacts with su(Hw) (via zinc fingers). Interacts with xmas-2; required for localization to the nuclear periphery. Interacts with the nuclear pore complex (NPC).</text>
</comment>
<comment type="subcellular location">
    <subcellularLocation>
        <location evidence="2">Nucleus</location>
        <location evidence="2">Nucleoplasm</location>
    </subcellularLocation>
    <subcellularLocation>
        <location evidence="2">Cytoplasm</location>
    </subcellularLocation>
</comment>
<comment type="similarity">
    <text evidence="2">Belongs to the ENY2 family.</text>
</comment>
<name>ENY2_DROSE</name>
<evidence type="ECO:0000250" key="1"/>
<evidence type="ECO:0000255" key="2">
    <source>
        <dbReference type="HAMAP-Rule" id="MF_03046"/>
    </source>
</evidence>
<reference key="1">
    <citation type="journal article" date="2007" name="Nature">
        <title>Evolution of genes and genomes on the Drosophila phylogeny.</title>
        <authorList>
            <consortium name="Drosophila 12 genomes consortium"/>
        </authorList>
    </citation>
    <scope>NUCLEOTIDE SEQUENCE [LARGE SCALE GENOMIC DNA]</scope>
    <source>
        <strain>Rob3c / Tucson 14021-0248.25</strain>
    </source>
</reference>
<gene>
    <name evidence="2" type="primary">e(y)2</name>
    <name type="ORF">GM13063</name>
</gene>
<keyword id="KW-0010">Activator</keyword>
<keyword id="KW-0156">Chromatin regulator</keyword>
<keyword id="KW-0963">Cytoplasm</keyword>
<keyword id="KW-0509">mRNA transport</keyword>
<keyword id="KW-0539">Nucleus</keyword>
<keyword id="KW-0653">Protein transport</keyword>
<keyword id="KW-1185">Reference proteome</keyword>
<keyword id="KW-0804">Transcription</keyword>
<keyword id="KW-0805">Transcription regulation</keyword>
<keyword id="KW-0811">Translocation</keyword>
<keyword id="KW-0813">Transport</keyword>